<accession>A4TK66</accession>
<reference key="1">
    <citation type="submission" date="2007-02" db="EMBL/GenBank/DDBJ databases">
        <title>Complete sequence of chromosome of Yersinia pestis Pestoides F.</title>
        <authorList>
            <consortium name="US DOE Joint Genome Institute"/>
            <person name="Copeland A."/>
            <person name="Lucas S."/>
            <person name="Lapidus A."/>
            <person name="Barry K."/>
            <person name="Detter J.C."/>
            <person name="Glavina del Rio T."/>
            <person name="Hammon N."/>
            <person name="Israni S."/>
            <person name="Dalin E."/>
            <person name="Tice H."/>
            <person name="Pitluck S."/>
            <person name="Di Bartolo G."/>
            <person name="Chain P."/>
            <person name="Malfatti S."/>
            <person name="Shin M."/>
            <person name="Vergez L."/>
            <person name="Schmutz J."/>
            <person name="Larimer F."/>
            <person name="Land M."/>
            <person name="Hauser L."/>
            <person name="Worsham P."/>
            <person name="Chu M."/>
            <person name="Bearden S."/>
            <person name="Garcia E."/>
            <person name="Richardson P."/>
        </authorList>
    </citation>
    <scope>NUCLEOTIDE SEQUENCE [LARGE SCALE GENOMIC DNA]</scope>
    <source>
        <strain>Pestoides F</strain>
    </source>
</reference>
<gene>
    <name evidence="1" type="primary">fliT</name>
    <name type="ordered locus">YPDSF_1287</name>
</gene>
<protein>
    <recommendedName>
        <fullName evidence="1">Flagellar protein FliT</fullName>
    </recommendedName>
</protein>
<name>FLIT_YERPP</name>
<evidence type="ECO:0000255" key="1">
    <source>
        <dbReference type="HAMAP-Rule" id="MF_01180"/>
    </source>
</evidence>
<keyword id="KW-1005">Bacterial flagellum biogenesis</keyword>
<keyword id="KW-0143">Chaperone</keyword>
<keyword id="KW-0963">Cytoplasm</keyword>
<keyword id="KW-0678">Repressor</keyword>
<keyword id="KW-0804">Transcription</keyword>
<keyword id="KW-0805">Transcription regulation</keyword>
<dbReference type="EMBL" id="CP000668">
    <property type="protein sequence ID" value="ABP39678.1"/>
    <property type="molecule type" value="Genomic_DNA"/>
</dbReference>
<dbReference type="RefSeq" id="WP_011906243.1">
    <property type="nucleotide sequence ID" value="NZ_CP009715.1"/>
</dbReference>
<dbReference type="SMR" id="A4TK66"/>
<dbReference type="KEGG" id="ypp:YPDSF_1287"/>
<dbReference type="PATRIC" id="fig|386656.14.peg.2516"/>
<dbReference type="GO" id="GO:0005829">
    <property type="term" value="C:cytosol"/>
    <property type="evidence" value="ECO:0007669"/>
    <property type="project" value="UniProtKB-SubCell"/>
</dbReference>
<dbReference type="GO" id="GO:0044781">
    <property type="term" value="P:bacterial-type flagellum organization"/>
    <property type="evidence" value="ECO:0007669"/>
    <property type="project" value="UniProtKB-KW"/>
</dbReference>
<dbReference type="GO" id="GO:1902209">
    <property type="term" value="P:negative regulation of bacterial-type flagellum assembly"/>
    <property type="evidence" value="ECO:0007669"/>
    <property type="project" value="UniProtKB-UniRule"/>
</dbReference>
<dbReference type="GO" id="GO:0006457">
    <property type="term" value="P:protein folding"/>
    <property type="evidence" value="ECO:0007669"/>
    <property type="project" value="UniProtKB-UniRule"/>
</dbReference>
<dbReference type="Gene3D" id="1.20.58.380">
    <property type="entry name" value="Flagellar protein flit"/>
    <property type="match status" value="1"/>
</dbReference>
<dbReference type="HAMAP" id="MF_01180">
    <property type="entry name" value="FliT"/>
    <property type="match status" value="1"/>
</dbReference>
<dbReference type="InterPro" id="IPR008622">
    <property type="entry name" value="FliT"/>
</dbReference>
<dbReference type="NCBIfam" id="NF007836">
    <property type="entry name" value="PRK10548.1"/>
    <property type="match status" value="1"/>
</dbReference>
<dbReference type="Pfam" id="PF05400">
    <property type="entry name" value="FliT"/>
    <property type="match status" value="1"/>
</dbReference>
<feature type="chain" id="PRO_0000353897" description="Flagellar protein FliT">
    <location>
        <begin position="1"/>
        <end position="120"/>
    </location>
</feature>
<feature type="region of interest" description="Required for homodimerization" evidence="1">
    <location>
        <begin position="1"/>
        <end position="50"/>
    </location>
</feature>
<feature type="region of interest" description="FliD binding" evidence="1">
    <location>
        <begin position="60"/>
        <end position="98"/>
    </location>
</feature>
<proteinExistence type="inferred from homology"/>
<comment type="function">
    <text evidence="1">Dual-function protein that regulates the transcription of class 2 flagellar operons and that also acts as an export chaperone for the filament-capping protein FliD. As a transcriptional regulator, acts as an anti-FlhDC factor; it directly binds FlhC, thus inhibiting the binding of the FlhC/FlhD complex to class 2 promoters, resulting in decreased expression of class 2 flagellar operons. As a chaperone, effects FliD transition to the membrane by preventing its premature polymerization, and by directing it to the export apparatus.</text>
</comment>
<comment type="subunit">
    <text evidence="1">Homodimer. Interacts with FliD and FlhC.</text>
</comment>
<comment type="subcellular location">
    <subcellularLocation>
        <location evidence="1">Cytoplasm</location>
        <location evidence="1">Cytosol</location>
    </subcellularLocation>
</comment>
<comment type="similarity">
    <text evidence="1">Belongs to the FliT family.</text>
</comment>
<organism>
    <name type="scientific">Yersinia pestis (strain Pestoides F)</name>
    <dbReference type="NCBI Taxonomy" id="386656"/>
    <lineage>
        <taxon>Bacteria</taxon>
        <taxon>Pseudomonadati</taxon>
        <taxon>Pseudomonadota</taxon>
        <taxon>Gammaproteobacteria</taxon>
        <taxon>Enterobacterales</taxon>
        <taxon>Yersiniaceae</taxon>
        <taxon>Yersinia</taxon>
    </lineage>
</organism>
<sequence length="120" mass="13942">MERHQHLLSEYQQILTLSEQMLMLATVENWNTLVDLEMTYLKAVENTANITISSCTSPVLQELLRQKLRSILENEIEIKRLLQRRLDKLSELVGQSTRQQAVNRTYGQFPDQALLLGETQ</sequence>